<evidence type="ECO:0000250" key="1"/>
<evidence type="ECO:0000250" key="2">
    <source>
        <dbReference type="UniProtKB" id="P19024"/>
    </source>
</evidence>
<evidence type="ECO:0000250" key="3">
    <source>
        <dbReference type="UniProtKB" id="P22460"/>
    </source>
</evidence>
<evidence type="ECO:0000250" key="4">
    <source>
        <dbReference type="UniProtKB" id="P63142"/>
    </source>
</evidence>
<evidence type="ECO:0000250" key="5">
    <source>
        <dbReference type="UniProtKB" id="Q61762"/>
    </source>
</evidence>
<evidence type="ECO:0000255" key="6"/>
<evidence type="ECO:0000256" key="7">
    <source>
        <dbReference type="SAM" id="MobiDB-lite"/>
    </source>
</evidence>
<evidence type="ECO:0000305" key="8"/>
<organism>
    <name type="scientific">Mustela putorius furo</name>
    <name type="common">European domestic ferret</name>
    <name type="synonym">Mustela furo</name>
    <dbReference type="NCBI Taxonomy" id="9669"/>
    <lineage>
        <taxon>Eukaryota</taxon>
        <taxon>Metazoa</taxon>
        <taxon>Chordata</taxon>
        <taxon>Craniata</taxon>
        <taxon>Vertebrata</taxon>
        <taxon>Euteleostomi</taxon>
        <taxon>Mammalia</taxon>
        <taxon>Eutheria</taxon>
        <taxon>Laurasiatheria</taxon>
        <taxon>Carnivora</taxon>
        <taxon>Caniformia</taxon>
        <taxon>Musteloidea</taxon>
        <taxon>Mustelidae</taxon>
        <taxon>Mustelinae</taxon>
        <taxon>Mustela</taxon>
    </lineage>
</organism>
<protein>
    <recommendedName>
        <fullName>Potassium voltage-gated channel subfamily A member 5</fullName>
    </recommendedName>
    <alternativeName>
        <fullName>Voltage-gated potassium channel subunit Kv1.5</fullName>
    </alternativeName>
</protein>
<dbReference type="EMBL" id="U45979">
    <property type="protein sequence ID" value="AAB41145.1"/>
    <property type="molecule type" value="mRNA"/>
</dbReference>
<dbReference type="RefSeq" id="NP_001297131.1">
    <property type="nucleotide sequence ID" value="NM_001310202.1"/>
</dbReference>
<dbReference type="SMR" id="P79197"/>
<dbReference type="STRING" id="9669.ENSMPUP00000019031"/>
<dbReference type="GlyCosmos" id="P79197">
    <property type="glycosylation" value="1 site, No reported glycans"/>
</dbReference>
<dbReference type="GeneID" id="101688777"/>
<dbReference type="CTD" id="3741"/>
<dbReference type="eggNOG" id="KOG1545">
    <property type="taxonomic scope" value="Eukaryota"/>
</dbReference>
<dbReference type="HOGENOM" id="CLU_011722_4_0_1"/>
<dbReference type="InParanoid" id="P79197"/>
<dbReference type="OMA" id="PWKINDM"/>
<dbReference type="OrthoDB" id="415460at2759"/>
<dbReference type="Proteomes" id="UP000000715">
    <property type="component" value="Unplaced"/>
</dbReference>
<dbReference type="GO" id="GO:0009986">
    <property type="term" value="C:cell surface"/>
    <property type="evidence" value="ECO:0007669"/>
    <property type="project" value="Ensembl"/>
</dbReference>
<dbReference type="GO" id="GO:0014704">
    <property type="term" value="C:intercalated disc"/>
    <property type="evidence" value="ECO:0007669"/>
    <property type="project" value="Ensembl"/>
</dbReference>
<dbReference type="GO" id="GO:0045121">
    <property type="term" value="C:membrane raft"/>
    <property type="evidence" value="ECO:0007669"/>
    <property type="project" value="Ensembl"/>
</dbReference>
<dbReference type="GO" id="GO:0005886">
    <property type="term" value="C:plasma membrane"/>
    <property type="evidence" value="ECO:0000250"/>
    <property type="project" value="UniProtKB"/>
</dbReference>
<dbReference type="GO" id="GO:0034705">
    <property type="term" value="C:potassium channel complex"/>
    <property type="evidence" value="ECO:0000250"/>
    <property type="project" value="UniProtKB"/>
</dbReference>
<dbReference type="GO" id="GO:0008076">
    <property type="term" value="C:voltage-gated potassium channel complex"/>
    <property type="evidence" value="ECO:0000250"/>
    <property type="project" value="UniProtKB"/>
</dbReference>
<dbReference type="GO" id="GO:0051393">
    <property type="term" value="F:alpha-actinin binding"/>
    <property type="evidence" value="ECO:0007669"/>
    <property type="project" value="Ensembl"/>
</dbReference>
<dbReference type="GO" id="GO:0005251">
    <property type="term" value="F:delayed rectifier potassium channel activity"/>
    <property type="evidence" value="ECO:0000250"/>
    <property type="project" value="UniProtKB"/>
</dbReference>
<dbReference type="GO" id="GO:0015271">
    <property type="term" value="F:outward rectifier potassium channel activity"/>
    <property type="evidence" value="ECO:0007669"/>
    <property type="project" value="Ensembl"/>
</dbReference>
<dbReference type="GO" id="GO:0019901">
    <property type="term" value="F:protein kinase binding"/>
    <property type="evidence" value="ECO:0007669"/>
    <property type="project" value="Ensembl"/>
</dbReference>
<dbReference type="GO" id="GO:0097110">
    <property type="term" value="F:scaffold protein binding"/>
    <property type="evidence" value="ECO:0007669"/>
    <property type="project" value="Ensembl"/>
</dbReference>
<dbReference type="GO" id="GO:0086089">
    <property type="term" value="F:voltage-gated potassium channel activity involved in atrial cardiac muscle cell action potential repolarization"/>
    <property type="evidence" value="ECO:0007669"/>
    <property type="project" value="Ensembl"/>
</dbReference>
<dbReference type="GO" id="GO:0086087">
    <property type="term" value="F:voltage-gated potassium channel activity involved in bundle of His cell action potential repolarization"/>
    <property type="evidence" value="ECO:0007669"/>
    <property type="project" value="Ensembl"/>
</dbReference>
<dbReference type="GO" id="GO:0086090">
    <property type="term" value="F:voltage-gated potassium channel activity involved in SA node cell action potential repolarization"/>
    <property type="evidence" value="ECO:0007669"/>
    <property type="project" value="Ensembl"/>
</dbReference>
<dbReference type="GO" id="GO:0060081">
    <property type="term" value="P:membrane hyperpolarization"/>
    <property type="evidence" value="ECO:0007669"/>
    <property type="project" value="Ensembl"/>
</dbReference>
<dbReference type="GO" id="GO:0098914">
    <property type="term" value="P:membrane repolarization during atrial cardiac muscle cell action potential"/>
    <property type="evidence" value="ECO:0007669"/>
    <property type="project" value="Ensembl"/>
</dbReference>
<dbReference type="GO" id="GO:0097623">
    <property type="term" value="P:potassium ion export across plasma membrane"/>
    <property type="evidence" value="ECO:0007669"/>
    <property type="project" value="Ensembl"/>
</dbReference>
<dbReference type="GO" id="GO:0071805">
    <property type="term" value="P:potassium ion transmembrane transport"/>
    <property type="evidence" value="ECO:0000250"/>
    <property type="project" value="UniProtKB"/>
</dbReference>
<dbReference type="GO" id="GO:0051260">
    <property type="term" value="P:protein homooligomerization"/>
    <property type="evidence" value="ECO:0007669"/>
    <property type="project" value="InterPro"/>
</dbReference>
<dbReference type="GO" id="GO:0060372">
    <property type="term" value="P:regulation of atrial cardiac muscle cell membrane repolarization"/>
    <property type="evidence" value="ECO:0007669"/>
    <property type="project" value="Ensembl"/>
</dbReference>
<dbReference type="GO" id="GO:0086091">
    <property type="term" value="P:regulation of heart rate by cardiac conduction"/>
    <property type="evidence" value="ECO:0007669"/>
    <property type="project" value="Ensembl"/>
</dbReference>
<dbReference type="GO" id="GO:0043266">
    <property type="term" value="P:regulation of potassium ion transport"/>
    <property type="evidence" value="ECO:0007669"/>
    <property type="project" value="Ensembl"/>
</dbReference>
<dbReference type="FunFam" id="1.10.287.70:FF:000002">
    <property type="entry name" value="Potassium voltage-gated channel subfamily a member"/>
    <property type="match status" value="1"/>
</dbReference>
<dbReference type="FunFam" id="3.30.710.10:FF:000012">
    <property type="entry name" value="Potassium voltage-gated channel subfamily A member 10"/>
    <property type="match status" value="1"/>
</dbReference>
<dbReference type="FunFam" id="1.20.120.350:FF:000025">
    <property type="entry name" value="Potassium voltage-gated channel subfamily A member 2"/>
    <property type="match status" value="1"/>
</dbReference>
<dbReference type="Gene3D" id="1.10.287.70">
    <property type="match status" value="1"/>
</dbReference>
<dbReference type="Gene3D" id="3.30.710.10">
    <property type="entry name" value="Potassium Channel Kv1.1, Chain A"/>
    <property type="match status" value="1"/>
</dbReference>
<dbReference type="Gene3D" id="1.20.120.350">
    <property type="entry name" value="Voltage-gated potassium channels. Chain C"/>
    <property type="match status" value="1"/>
</dbReference>
<dbReference type="InterPro" id="IPR000210">
    <property type="entry name" value="BTB/POZ_dom"/>
</dbReference>
<dbReference type="InterPro" id="IPR005821">
    <property type="entry name" value="Ion_trans_dom"/>
</dbReference>
<dbReference type="InterPro" id="IPR003968">
    <property type="entry name" value="K_chnl_volt-dep_Kv"/>
</dbReference>
<dbReference type="InterPro" id="IPR003972">
    <property type="entry name" value="K_chnl_volt-dep_Kv1"/>
</dbReference>
<dbReference type="InterPro" id="IPR004052">
    <property type="entry name" value="K_chnl_volt-dep_Kv1.5"/>
</dbReference>
<dbReference type="InterPro" id="IPR011333">
    <property type="entry name" value="SKP1/BTB/POZ_sf"/>
</dbReference>
<dbReference type="InterPro" id="IPR003131">
    <property type="entry name" value="T1-type_BTB"/>
</dbReference>
<dbReference type="InterPro" id="IPR028325">
    <property type="entry name" value="VG_K_chnl"/>
</dbReference>
<dbReference type="InterPro" id="IPR027359">
    <property type="entry name" value="Volt_channel_dom_sf"/>
</dbReference>
<dbReference type="PANTHER" id="PTHR11537:SF250">
    <property type="entry name" value="POTASSIUM VOLTAGE-GATED CHANNEL SUBFAMILY A MEMBER 5"/>
    <property type="match status" value="1"/>
</dbReference>
<dbReference type="PANTHER" id="PTHR11537">
    <property type="entry name" value="VOLTAGE-GATED POTASSIUM CHANNEL"/>
    <property type="match status" value="1"/>
</dbReference>
<dbReference type="Pfam" id="PF02214">
    <property type="entry name" value="BTB_2"/>
    <property type="match status" value="1"/>
</dbReference>
<dbReference type="Pfam" id="PF00520">
    <property type="entry name" value="Ion_trans"/>
    <property type="match status" value="1"/>
</dbReference>
<dbReference type="PRINTS" id="PR00169">
    <property type="entry name" value="KCHANNEL"/>
</dbReference>
<dbReference type="PRINTS" id="PR01512">
    <property type="entry name" value="KV15CHANNEL"/>
</dbReference>
<dbReference type="PRINTS" id="PR01491">
    <property type="entry name" value="KVCHANNEL"/>
</dbReference>
<dbReference type="PRINTS" id="PR01496">
    <property type="entry name" value="SHAKERCHANEL"/>
</dbReference>
<dbReference type="SMART" id="SM00225">
    <property type="entry name" value="BTB"/>
    <property type="match status" value="1"/>
</dbReference>
<dbReference type="SUPFAM" id="SSF54695">
    <property type="entry name" value="POZ domain"/>
    <property type="match status" value="1"/>
</dbReference>
<dbReference type="SUPFAM" id="SSF81324">
    <property type="entry name" value="Voltage-gated potassium channels"/>
    <property type="match status" value="1"/>
</dbReference>
<proteinExistence type="evidence at transcript level"/>
<name>KCNA5_MUSPF</name>
<keyword id="KW-1003">Cell membrane</keyword>
<keyword id="KW-0325">Glycoprotein</keyword>
<keyword id="KW-0407">Ion channel</keyword>
<keyword id="KW-0406">Ion transport</keyword>
<keyword id="KW-1017">Isopeptide bond</keyword>
<keyword id="KW-0449">Lipoprotein</keyword>
<keyword id="KW-0472">Membrane</keyword>
<keyword id="KW-0564">Palmitate</keyword>
<keyword id="KW-0630">Potassium</keyword>
<keyword id="KW-0631">Potassium channel</keyword>
<keyword id="KW-0633">Potassium transport</keyword>
<keyword id="KW-1185">Reference proteome</keyword>
<keyword id="KW-0812">Transmembrane</keyword>
<keyword id="KW-1133">Transmembrane helix</keyword>
<keyword id="KW-0813">Transport</keyword>
<keyword id="KW-0832">Ubl conjugation</keyword>
<keyword id="KW-0851">Voltage-gated channel</keyword>
<feature type="chain" id="PRO_0000053987" description="Potassium voltage-gated channel subfamily A member 5">
    <location>
        <begin position="1"/>
        <end position="601"/>
    </location>
</feature>
<feature type="topological domain" description="Cytoplasmic" evidence="4">
    <location>
        <begin position="1"/>
        <end position="236"/>
    </location>
</feature>
<feature type="transmembrane region" description="Helical; Name=Segment S1" evidence="4">
    <location>
        <begin position="237"/>
        <end position="258"/>
    </location>
</feature>
<feature type="topological domain" description="Extracellular" evidence="4">
    <location>
        <begin position="259"/>
        <end position="312"/>
    </location>
</feature>
<feature type="transmembrane region" description="Helical; Name=Segment S2" evidence="4">
    <location>
        <begin position="313"/>
        <end position="334"/>
    </location>
</feature>
<feature type="topological domain" description="Cytoplasmic" evidence="4">
    <location>
        <begin position="335"/>
        <end position="345"/>
    </location>
</feature>
<feature type="transmembrane region" description="Helical; Name=Segment S3" evidence="4">
    <location>
        <begin position="346"/>
        <end position="366"/>
    </location>
</feature>
<feature type="topological domain" description="Extracellular" evidence="4">
    <location>
        <begin position="367"/>
        <end position="383"/>
    </location>
</feature>
<feature type="transmembrane region" description="Helical; Voltage-sensor; Name=Segment S4" evidence="4">
    <location>
        <begin position="384"/>
        <end position="404"/>
    </location>
</feature>
<feature type="topological domain" description="Cytoplasmic" evidence="4">
    <location>
        <begin position="405"/>
        <end position="419"/>
    </location>
</feature>
<feature type="transmembrane region" description="Helical; Name=Segment S5" evidence="4">
    <location>
        <begin position="420"/>
        <end position="441"/>
    </location>
</feature>
<feature type="topological domain" description="Extracellular" evidence="4">
    <location>
        <begin position="442"/>
        <end position="455"/>
    </location>
</feature>
<feature type="intramembrane region" description="Helical; Name=Pore helix" evidence="4">
    <location>
        <begin position="456"/>
        <end position="467"/>
    </location>
</feature>
<feature type="intramembrane region" evidence="4">
    <location>
        <begin position="468"/>
        <end position="475"/>
    </location>
</feature>
<feature type="topological domain" description="Extracellular" evidence="4">
    <location>
        <begin position="476"/>
        <end position="482"/>
    </location>
</feature>
<feature type="transmembrane region" description="Helical; Name=Segment S6" evidence="4">
    <location>
        <begin position="483"/>
        <end position="511"/>
    </location>
</feature>
<feature type="topological domain" description="Cytoplasmic" evidence="4">
    <location>
        <begin position="512"/>
        <end position="601"/>
    </location>
</feature>
<feature type="region of interest" description="Tetramerization domain" evidence="3">
    <location>
        <begin position="1"/>
        <end position="200"/>
    </location>
</feature>
<feature type="region of interest" description="Disordered" evidence="7">
    <location>
        <begin position="19"/>
        <end position="93"/>
    </location>
</feature>
<feature type="region of interest" description="Disordered" evidence="7">
    <location>
        <begin position="275"/>
        <end position="297"/>
    </location>
</feature>
<feature type="region of interest" description="S4-S5 linker" evidence="4">
    <location>
        <begin position="406"/>
        <end position="419"/>
    </location>
</feature>
<feature type="region of interest" description="Disordered" evidence="7">
    <location>
        <begin position="521"/>
        <end position="545"/>
    </location>
</feature>
<feature type="short sequence motif" description="Selectivity filter" evidence="4">
    <location>
        <begin position="468"/>
        <end position="473"/>
    </location>
</feature>
<feature type="short sequence motif" description="PDZ-binding" evidence="1">
    <location>
        <begin position="599"/>
        <end position="601"/>
    </location>
</feature>
<feature type="compositionally biased region" description="Pro residues" evidence="7">
    <location>
        <begin position="65"/>
        <end position="74"/>
    </location>
</feature>
<feature type="lipid moiety-binding region" description="S-palmitoyl cysteine" evidence="6">
    <location>
        <position position="335"/>
    </location>
</feature>
<feature type="glycosylation site" description="N-linked (GlcNAc...) asparagine" evidence="6">
    <location>
        <position position="288"/>
    </location>
</feature>
<feature type="cross-link" description="Glycyl lysine isopeptide (Lys-Gly) (interchain with G-Cter in SUMO)" evidence="3">
    <location>
        <position position="210"/>
    </location>
</feature>
<feature type="cross-link" description="Glycyl lysine isopeptide (Lys-Gly) (interchain with G-Cter in SUMO)" evidence="3">
    <location>
        <position position="524"/>
    </location>
</feature>
<accession>P79197</accession>
<comment type="function">
    <text evidence="2 3 5">Voltage-gated potassium channel that mediates transmembrane potassium transport in excitable membranes. Forms tetrameric potassium-selective channels through which potassium ions pass in accordance with their electrochemical gradient. The channel alternates between opened and closed conformations in response to the voltage difference across the membrane (By similarity). Can form functional homotetrameric channels and heterotetrameric channels that contain variable proportions of KCNA1, KCNA2, KCNA4, KCNA5, and possibly other family members as well; channel properties depend on the type of alpha subunits that are part of the channel (By similarity). Channel properties are modulated by cytoplasmic beta subunits that regulate the subcellular location of the alpha subunits and promote rapid inactivation (By similarity). Homotetrameric channels display rapid activation and slow inactivation (By similarity). Required for normal electrical conduction including formation of the infranodal ventricular conduction system and normal action potential configuration, as a result of its interaction with XIRP2 (By similarity). May play a role in regulating the secretion of insulin in normal pancreatic islets (By similarity).</text>
</comment>
<comment type="catalytic activity">
    <reaction evidence="3">
        <text>K(+)(in) = K(+)(out)</text>
        <dbReference type="Rhea" id="RHEA:29463"/>
        <dbReference type="ChEBI" id="CHEBI:29103"/>
    </reaction>
</comment>
<comment type="subunit">
    <text evidence="2 3 5">Homotetramer and heterotetramer of potassium channel proteins. Interacts with DLG1, which enhances channel currents. Forms a ternary complex with DLG1 and CAV3 (By similarity). Interacts with KCNAB1 (By similarity). Interacts with UBE2I (By similarity). Interacts with XIRP2; the interaction is required for normal action potential configuration in the heart (By similarity).</text>
</comment>
<comment type="subcellular location">
    <subcellularLocation>
        <location evidence="3">Cell membrane</location>
        <topology evidence="8">Multi-pass membrane protein</topology>
    </subcellularLocation>
</comment>
<comment type="domain">
    <text evidence="1">The amino terminus may be important in determining the rate of inactivation of the channel while the C-terminal PDZ-binding motif may play a role in modulation of channel activity and/or targeting of the channel to specific subcellular compartments.</text>
</comment>
<comment type="domain">
    <text evidence="4">The transmembrane segment S4 functions as a voltage-sensor and is characterized by a series of positively charged amino acids at every third position. Channel opening and closing is effected by a conformation change that affects the position and orientation of the voltage-sensor paddle formed by S3 and S4 within the membrane. A transmembrane electric field that is positive inside would push the positively charged S4 segment outwards, thereby opening the pore, while a field that is negative inside would pull the S4 segment inwards and close the pore. Changes in the position and orientation of S4 are then transmitted to the activation gate formed by the inner helix bundle via the S4-S5 linker region.</text>
</comment>
<comment type="PTM">
    <text evidence="3">Glycosylated.</text>
</comment>
<comment type="PTM">
    <text evidence="3">Sumoylated on Lys-210, and Lys-524, preferentially with SUMO3. Sumoylation regulates the voltage sensitivity of the channel (By similarity).</text>
</comment>
<comment type="similarity">
    <text evidence="8">Belongs to the potassium channel family. A (Shaker) (TC 1.A.1.2) subfamily. Kv1.5/KCNA5 sub-subfamily.</text>
</comment>
<reference key="1">
    <citation type="submission" date="1996-01" db="EMBL/GenBank/DDBJ databases">
        <authorList>
            <person name="Schwegel T."/>
            <person name="Folander K."/>
            <person name="Swanson R."/>
        </authorList>
    </citation>
    <scope>NUCLEOTIDE SEQUENCE [MRNA]</scope>
    <source>
        <tissue>Heart atrium</tissue>
    </source>
</reference>
<gene>
    <name type="primary">KCNA5</name>
</gene>
<sequence length="601" mass="65889">MEIALVPLENGGAMTVRGGGEAGTGCSQAIGGELQCPPTAGLSDGPKEPAPRARGTQRGVDPGGRPLPPLPQDPQQPRRLPPEDEEGEGDPALGMAEDQVLGAGSLHHQRVLINISGLRFETQLGTLAQFPNTLLGDPAKRLRYFDPLRNEYFFDRNRPSFDGILYYYQSGGRLRRPVNVSLDVFADEIRFYQLGDEAMERFREDEGFIKEEEKPLPRNEFQRQVWLIFEYPESSGSARGIAIVSVLVILISIITFCLETLPEFRDERELLRHPPVPHQPLGPSRGANGSGPLAPPSGPTVAPLLPRTLADPFFIVETTCVIWFTFELLVRFFACPSKAEFSRNIMNIIDVVAIFPYFITLGTELAEQPGGGGGGQNGQQAMSLAILRVIRLVRVFRIFKLSRHSKGLQILGKTLQASMRELGLLIFFLFIGVILFSSAVYFAEADNQETHFSSIPDAFWWAVVTMTTVGYGDMRPVTVGGKIVGSLCAIAGVLTIALPVPVIVSNFNYFYHRETDHEEQAALKEEQGSQSHGTGLDSGGPRKASWSKGSLCKAGVSLENADGARRGSCPLEKCNLKAKSNVDLRRSLYALCLDTSRETDL</sequence>